<gene>
    <name evidence="1" type="primary">rlmI</name>
    <name type="ordered locus">SPAB_02477</name>
</gene>
<feature type="chain" id="PRO_0000366249" description="Ribosomal RNA large subunit methyltransferase I">
    <location>
        <begin position="1"/>
        <end position="403"/>
    </location>
</feature>
<feature type="domain" description="PUA" evidence="1">
    <location>
        <begin position="9"/>
        <end position="88"/>
    </location>
</feature>
<evidence type="ECO:0000255" key="1">
    <source>
        <dbReference type="HAMAP-Rule" id="MF_01857"/>
    </source>
</evidence>
<proteinExistence type="inferred from homology"/>
<keyword id="KW-0963">Cytoplasm</keyword>
<keyword id="KW-0489">Methyltransferase</keyword>
<keyword id="KW-0694">RNA-binding</keyword>
<keyword id="KW-0698">rRNA processing</keyword>
<keyword id="KW-0949">S-adenosyl-L-methionine</keyword>
<keyword id="KW-0808">Transferase</keyword>
<name>RLMI_SALPB</name>
<protein>
    <recommendedName>
        <fullName evidence="1">Ribosomal RNA large subunit methyltransferase I</fullName>
        <ecNumber evidence="1">2.1.1.191</ecNumber>
    </recommendedName>
    <alternativeName>
        <fullName evidence="1">23S rRNA m5C1962 methyltransferase</fullName>
    </alternativeName>
    <alternativeName>
        <fullName evidence="1">rRNA (cytosine-C(5)-)-methyltransferase RlmI</fullName>
    </alternativeName>
</protein>
<accession>A9N6W0</accession>
<comment type="function">
    <text evidence="1">Specifically methylates the cytosine at position 1962 (m5C1962) of 23S rRNA.</text>
</comment>
<comment type="catalytic activity">
    <reaction evidence="1">
        <text>cytidine(1962) in 23S rRNA + S-adenosyl-L-methionine = 5-methylcytidine(1962) in 23S rRNA + S-adenosyl-L-homocysteine + H(+)</text>
        <dbReference type="Rhea" id="RHEA:42912"/>
        <dbReference type="Rhea" id="RHEA-COMP:10382"/>
        <dbReference type="Rhea" id="RHEA-COMP:10386"/>
        <dbReference type="ChEBI" id="CHEBI:15378"/>
        <dbReference type="ChEBI" id="CHEBI:57856"/>
        <dbReference type="ChEBI" id="CHEBI:59789"/>
        <dbReference type="ChEBI" id="CHEBI:74483"/>
        <dbReference type="ChEBI" id="CHEBI:82748"/>
        <dbReference type="EC" id="2.1.1.191"/>
    </reaction>
</comment>
<comment type="subcellular location">
    <subcellularLocation>
        <location evidence="1">Cytoplasm</location>
    </subcellularLocation>
</comment>
<comment type="similarity">
    <text evidence="1">Belongs to the methyltransferase superfamily. RlmI family.</text>
</comment>
<dbReference type="EC" id="2.1.1.191" evidence="1"/>
<dbReference type="EMBL" id="CP000886">
    <property type="protein sequence ID" value="ABX67857.1"/>
    <property type="molecule type" value="Genomic_DNA"/>
</dbReference>
<dbReference type="RefSeq" id="WP_000140480.1">
    <property type="nucleotide sequence ID" value="NC_010102.1"/>
</dbReference>
<dbReference type="SMR" id="A9N6W0"/>
<dbReference type="KEGG" id="spq:SPAB_02477"/>
<dbReference type="PATRIC" id="fig|1016998.12.peg.2344"/>
<dbReference type="HOGENOM" id="CLU_014042_0_0_6"/>
<dbReference type="BioCyc" id="SENT1016998:SPAB_RS10065-MONOMER"/>
<dbReference type="Proteomes" id="UP000008556">
    <property type="component" value="Chromosome"/>
</dbReference>
<dbReference type="GO" id="GO:0005737">
    <property type="term" value="C:cytoplasm"/>
    <property type="evidence" value="ECO:0007669"/>
    <property type="project" value="UniProtKB-SubCell"/>
</dbReference>
<dbReference type="GO" id="GO:0003723">
    <property type="term" value="F:RNA binding"/>
    <property type="evidence" value="ECO:0007669"/>
    <property type="project" value="UniProtKB-KW"/>
</dbReference>
<dbReference type="GO" id="GO:0016434">
    <property type="term" value="F:rRNA (cytosine) methyltransferase activity"/>
    <property type="evidence" value="ECO:0007669"/>
    <property type="project" value="UniProtKB-UniRule"/>
</dbReference>
<dbReference type="CDD" id="cd02440">
    <property type="entry name" value="AdoMet_MTases"/>
    <property type="match status" value="1"/>
</dbReference>
<dbReference type="CDD" id="cd21153">
    <property type="entry name" value="PUA_RlmI"/>
    <property type="match status" value="1"/>
</dbReference>
<dbReference type="CDD" id="cd11572">
    <property type="entry name" value="RlmI_M_like"/>
    <property type="match status" value="1"/>
</dbReference>
<dbReference type="FunFam" id="3.40.50.150:FF:000044">
    <property type="entry name" value="Ribosomal RNA large subunit methyltransferase I"/>
    <property type="match status" value="1"/>
</dbReference>
<dbReference type="Gene3D" id="2.30.130.10">
    <property type="entry name" value="PUA domain"/>
    <property type="match status" value="1"/>
</dbReference>
<dbReference type="Gene3D" id="3.30.750.80">
    <property type="entry name" value="RNA methyltransferase domain (HRMD) like"/>
    <property type="match status" value="1"/>
</dbReference>
<dbReference type="Gene3D" id="3.40.50.150">
    <property type="entry name" value="Vaccinia Virus protein VP39"/>
    <property type="match status" value="1"/>
</dbReference>
<dbReference type="HAMAP" id="MF_01857">
    <property type="entry name" value="23SrRNA_methyltr_I"/>
    <property type="match status" value="1"/>
</dbReference>
<dbReference type="InterPro" id="IPR002478">
    <property type="entry name" value="PUA"/>
</dbReference>
<dbReference type="InterPro" id="IPR015947">
    <property type="entry name" value="PUA-like_sf"/>
</dbReference>
<dbReference type="InterPro" id="IPR036974">
    <property type="entry name" value="PUA_sf"/>
</dbReference>
<dbReference type="InterPro" id="IPR023542">
    <property type="entry name" value="RLMI"/>
</dbReference>
<dbReference type="InterPro" id="IPR041532">
    <property type="entry name" value="RlmI-like_PUA"/>
</dbReference>
<dbReference type="InterPro" id="IPR019614">
    <property type="entry name" value="SAM-dep_methyl-trfase"/>
</dbReference>
<dbReference type="InterPro" id="IPR029063">
    <property type="entry name" value="SAM-dependent_MTases_sf"/>
</dbReference>
<dbReference type="NCBIfam" id="NF011707">
    <property type="entry name" value="PRK15128.1"/>
    <property type="match status" value="1"/>
</dbReference>
<dbReference type="PANTHER" id="PTHR42873">
    <property type="entry name" value="RIBOSOMAL RNA LARGE SUBUNIT METHYLTRANSFERASE"/>
    <property type="match status" value="1"/>
</dbReference>
<dbReference type="PANTHER" id="PTHR42873:SF1">
    <property type="entry name" value="S-ADENOSYLMETHIONINE-DEPENDENT METHYLTRANSFERASE DOMAIN-CONTAINING PROTEIN"/>
    <property type="match status" value="1"/>
</dbReference>
<dbReference type="Pfam" id="PF10672">
    <property type="entry name" value="Methyltrans_SAM"/>
    <property type="match status" value="1"/>
</dbReference>
<dbReference type="Pfam" id="PF17785">
    <property type="entry name" value="PUA_3"/>
    <property type="match status" value="1"/>
</dbReference>
<dbReference type="SMART" id="SM00359">
    <property type="entry name" value="PUA"/>
    <property type="match status" value="1"/>
</dbReference>
<dbReference type="SUPFAM" id="SSF88697">
    <property type="entry name" value="PUA domain-like"/>
    <property type="match status" value="1"/>
</dbReference>
<dbReference type="SUPFAM" id="SSF53335">
    <property type="entry name" value="S-adenosyl-L-methionine-dependent methyltransferases"/>
    <property type="match status" value="1"/>
</dbReference>
<dbReference type="PROSITE" id="PS50890">
    <property type="entry name" value="PUA"/>
    <property type="match status" value="1"/>
</dbReference>
<organism>
    <name type="scientific">Salmonella paratyphi B (strain ATCC BAA-1250 / SPB7)</name>
    <dbReference type="NCBI Taxonomy" id="1016998"/>
    <lineage>
        <taxon>Bacteria</taxon>
        <taxon>Pseudomonadati</taxon>
        <taxon>Pseudomonadota</taxon>
        <taxon>Gammaproteobacteria</taxon>
        <taxon>Enterobacterales</taxon>
        <taxon>Enterobacteriaceae</taxon>
        <taxon>Salmonella</taxon>
    </lineage>
</organism>
<sequence length="403" mass="45176">MTESTFPQYPRLVLSKGREKSLLRRHPWVFSGAVSRLEGKANLGETIDIVDHQGKWLARGAWSPASQIRARVWTFDKAESIDIAFFTRRLRQAQQWRDWLAKKDGLDSYRLIAGESDGLPGVTIDRFGHFLVLQLLSAGAEYQRAALISALQTCYPDCAIYDRSDVAVRKKEGMALTQGPVTGELPPALLPIEEHGMKLLVDIQGGHKTGYYLDQRDSRLATRRYVENQRVLNCFSYTGGFAVSALMGGCRQVVSVDTSQDALDIARQNVELNQLDLSKAEFVRDDVFKLLRAYREHGEKFDVIIMDPPKFVENKSQLMGACRGYKDINMLAIQLLNPGGILLTFSCSGLMTSDLFQKIIADAAIDAGRDVQFIEQFRQAADHPVIATYPEGLYLKGFACRVM</sequence>
<reference key="1">
    <citation type="submission" date="2007-11" db="EMBL/GenBank/DDBJ databases">
        <authorList>
            <consortium name="The Salmonella enterica serovar Paratyphi B Genome Sequencing Project"/>
            <person name="McClelland M."/>
            <person name="Sanderson E.K."/>
            <person name="Porwollik S."/>
            <person name="Spieth J."/>
            <person name="Clifton W.S."/>
            <person name="Fulton R."/>
            <person name="Cordes M."/>
            <person name="Wollam A."/>
            <person name="Shah N."/>
            <person name="Pepin K."/>
            <person name="Bhonagiri V."/>
            <person name="Nash W."/>
            <person name="Johnson M."/>
            <person name="Thiruvilangam P."/>
            <person name="Wilson R."/>
        </authorList>
    </citation>
    <scope>NUCLEOTIDE SEQUENCE [LARGE SCALE GENOMIC DNA]</scope>
    <source>
        <strain>ATCC BAA-1250 / SPB7</strain>
    </source>
</reference>